<sequence>MNLTDYVKTVSIEDFGWKFKHQALWNKRLRTTGGRFFPKDGHLDFNPKLYEEHGLETFRKIVRHELCHYHLYFQGKGCKHGDRDFKDLLARVDGLRYAPKMRNQAENYFLYQCQSCGHTYRRKRRVNTQKFGCGLCQGKLIFLNQS</sequence>
<gene>
    <name type="ordered locus">STER_0717</name>
</gene>
<evidence type="ECO:0000255" key="1">
    <source>
        <dbReference type="HAMAP-Rule" id="MF_00745"/>
    </source>
</evidence>
<protein>
    <recommendedName>
        <fullName evidence="1">Protein SprT-like</fullName>
    </recommendedName>
</protein>
<accession>Q03LE9</accession>
<keyword id="KW-0963">Cytoplasm</keyword>
<keyword id="KW-0479">Metal-binding</keyword>
<keyword id="KW-0862">Zinc</keyword>
<proteinExistence type="inferred from homology"/>
<reference key="1">
    <citation type="journal article" date="2006" name="Proc. Natl. Acad. Sci. U.S.A.">
        <title>Comparative genomics of the lactic acid bacteria.</title>
        <authorList>
            <person name="Makarova K.S."/>
            <person name="Slesarev A."/>
            <person name="Wolf Y.I."/>
            <person name="Sorokin A."/>
            <person name="Mirkin B."/>
            <person name="Koonin E.V."/>
            <person name="Pavlov A."/>
            <person name="Pavlova N."/>
            <person name="Karamychev V."/>
            <person name="Polouchine N."/>
            <person name="Shakhova V."/>
            <person name="Grigoriev I."/>
            <person name="Lou Y."/>
            <person name="Rohksar D."/>
            <person name="Lucas S."/>
            <person name="Huang K."/>
            <person name="Goodstein D.M."/>
            <person name="Hawkins T."/>
            <person name="Plengvidhya V."/>
            <person name="Welker D."/>
            <person name="Hughes J."/>
            <person name="Goh Y."/>
            <person name="Benson A."/>
            <person name="Baldwin K."/>
            <person name="Lee J.-H."/>
            <person name="Diaz-Muniz I."/>
            <person name="Dosti B."/>
            <person name="Smeianov V."/>
            <person name="Wechter W."/>
            <person name="Barabote R."/>
            <person name="Lorca G."/>
            <person name="Altermann E."/>
            <person name="Barrangou R."/>
            <person name="Ganesan B."/>
            <person name="Xie Y."/>
            <person name="Rawsthorne H."/>
            <person name="Tamir D."/>
            <person name="Parker C."/>
            <person name="Breidt F."/>
            <person name="Broadbent J.R."/>
            <person name="Hutkins R."/>
            <person name="O'Sullivan D."/>
            <person name="Steele J."/>
            <person name="Unlu G."/>
            <person name="Saier M.H. Jr."/>
            <person name="Klaenhammer T."/>
            <person name="Richardson P."/>
            <person name="Kozyavkin S."/>
            <person name="Weimer B.C."/>
            <person name="Mills D.A."/>
        </authorList>
    </citation>
    <scope>NUCLEOTIDE SEQUENCE [LARGE SCALE GENOMIC DNA]</scope>
    <source>
        <strain>ATCC BAA-491 / LMD-9</strain>
    </source>
</reference>
<feature type="chain" id="PRO_1000046524" description="Protein SprT-like">
    <location>
        <begin position="1"/>
        <end position="146"/>
    </location>
</feature>
<feature type="domain" description="SprT-like" evidence="1">
    <location>
        <begin position="6"/>
        <end position="141"/>
    </location>
</feature>
<feature type="active site" evidence="1">
    <location>
        <position position="65"/>
    </location>
</feature>
<feature type="binding site" evidence="1">
    <location>
        <position position="64"/>
    </location>
    <ligand>
        <name>Zn(2+)</name>
        <dbReference type="ChEBI" id="CHEBI:29105"/>
    </ligand>
</feature>
<feature type="binding site" evidence="1">
    <location>
        <position position="68"/>
    </location>
    <ligand>
        <name>Zn(2+)</name>
        <dbReference type="ChEBI" id="CHEBI:29105"/>
    </ligand>
</feature>
<name>SPRTL_STRTD</name>
<organism>
    <name type="scientific">Streptococcus thermophilus (strain ATCC BAA-491 / LMD-9)</name>
    <dbReference type="NCBI Taxonomy" id="322159"/>
    <lineage>
        <taxon>Bacteria</taxon>
        <taxon>Bacillati</taxon>
        <taxon>Bacillota</taxon>
        <taxon>Bacilli</taxon>
        <taxon>Lactobacillales</taxon>
        <taxon>Streptococcaceae</taxon>
        <taxon>Streptococcus</taxon>
    </lineage>
</organism>
<dbReference type="EMBL" id="CP000419">
    <property type="protein sequence ID" value="ABJ65973.1"/>
    <property type="molecule type" value="Genomic_DNA"/>
</dbReference>
<dbReference type="RefSeq" id="WP_002946099.1">
    <property type="nucleotide sequence ID" value="NC_008532.1"/>
</dbReference>
<dbReference type="SMR" id="Q03LE9"/>
<dbReference type="KEGG" id="ste:STER_0717"/>
<dbReference type="HOGENOM" id="CLU_123820_0_0_9"/>
<dbReference type="GO" id="GO:0005737">
    <property type="term" value="C:cytoplasm"/>
    <property type="evidence" value="ECO:0007669"/>
    <property type="project" value="UniProtKB-SubCell"/>
</dbReference>
<dbReference type="GO" id="GO:0008270">
    <property type="term" value="F:zinc ion binding"/>
    <property type="evidence" value="ECO:0007669"/>
    <property type="project" value="UniProtKB-UniRule"/>
</dbReference>
<dbReference type="GO" id="GO:0006950">
    <property type="term" value="P:response to stress"/>
    <property type="evidence" value="ECO:0007669"/>
    <property type="project" value="UniProtKB-ARBA"/>
</dbReference>
<dbReference type="HAMAP" id="MF_00745">
    <property type="entry name" value="SprT_like"/>
    <property type="match status" value="1"/>
</dbReference>
<dbReference type="InterPro" id="IPR006640">
    <property type="entry name" value="SprT-like_domain"/>
</dbReference>
<dbReference type="InterPro" id="IPR035240">
    <property type="entry name" value="SprT_Zn_ribbon"/>
</dbReference>
<dbReference type="InterPro" id="IPR023524">
    <property type="entry name" value="Uncharacterised_SprT-like"/>
</dbReference>
<dbReference type="NCBIfam" id="NF003339">
    <property type="entry name" value="PRK04351.1"/>
    <property type="match status" value="1"/>
</dbReference>
<dbReference type="Pfam" id="PF10263">
    <property type="entry name" value="SprT-like"/>
    <property type="match status" value="1"/>
</dbReference>
<dbReference type="Pfam" id="PF17283">
    <property type="entry name" value="Zn_ribbon_SprT"/>
    <property type="match status" value="1"/>
</dbReference>
<dbReference type="SMART" id="SM00731">
    <property type="entry name" value="SprT"/>
    <property type="match status" value="1"/>
</dbReference>
<comment type="cofactor">
    <cofactor evidence="1">
        <name>Zn(2+)</name>
        <dbReference type="ChEBI" id="CHEBI:29105"/>
    </cofactor>
    <text evidence="1">Binds 1 zinc ion.</text>
</comment>
<comment type="subcellular location">
    <subcellularLocation>
        <location evidence="1">Cytoplasm</location>
    </subcellularLocation>
</comment>
<comment type="similarity">
    <text evidence="1">Belongs to the SprT family.</text>
</comment>